<feature type="chain" id="PRO_0000273046" description="Epithelial splicing regulatory protein 1">
    <location>
        <begin position="1"/>
        <end position="681"/>
    </location>
</feature>
<feature type="domain" description="RRM 1" evidence="3">
    <location>
        <begin position="225"/>
        <end position="302"/>
    </location>
</feature>
<feature type="domain" description="RRM 2" evidence="3">
    <location>
        <begin position="326"/>
        <end position="406"/>
    </location>
</feature>
<feature type="domain" description="RRM 3" evidence="3">
    <location>
        <begin position="445"/>
        <end position="525"/>
    </location>
</feature>
<feature type="modified residue" description="Phosphoserine" evidence="2">
    <location>
        <position position="543"/>
    </location>
</feature>
<feature type="modified residue" description="Omega-N-methylarginine" evidence="10">
    <location>
        <position position="582"/>
    </location>
</feature>
<feature type="splice variant" id="VSP_022464" description="In isoform 3 and isoform 5." evidence="7 8">
    <location>
        <begin position="546"/>
        <end position="549"/>
    </location>
</feature>
<feature type="splice variant" id="VSP_022465" description="In isoform 2." evidence="7">
    <original>P</original>
    <variation>V</variation>
    <location>
        <position position="608"/>
    </location>
</feature>
<feature type="splice variant" id="VSP_022466" description="In isoform 2." evidence="7">
    <location>
        <begin position="609"/>
        <end position="681"/>
    </location>
</feature>
<feature type="splice variant" id="VSP_022467" description="In isoform 4 and isoform 5." evidence="6 8">
    <original>YATEDGLIHTNDQARTLPKEWVCI</original>
    <variation>CLKDVW</variation>
    <location>
        <begin position="658"/>
        <end position="681"/>
    </location>
</feature>
<feature type="sequence variant" id="VAR_030073" description="In dbSNP:rs2303454.">
    <original>Y</original>
    <variation>C</variation>
    <location>
        <position position="196"/>
    </location>
</feature>
<feature type="sequence variant" id="VAR_080811" description="In DFNB109; hypomorphic mutation affecting alternative splicing in patient-derived induced pluripotent stem cells and other cell-based assays; dbSNP:rs1554577402." evidence="5">
    <original>L</original>
    <variation>V</variation>
    <location>
        <position position="259"/>
    </location>
</feature>
<feature type="sequence conflict" description="In Ref. 1; BX647570." evidence="9" ref="1">
    <original>A</original>
    <variation>V</variation>
    <location>
        <position position="505"/>
    </location>
</feature>
<feature type="sequence conflict" description="In Ref. 3; AAH99916." evidence="9" ref="3">
    <original>F</original>
    <variation>S</variation>
    <location>
        <position position="653"/>
    </location>
</feature>
<feature type="strand" evidence="14">
    <location>
        <begin position="6"/>
        <end position="17"/>
    </location>
</feature>
<feature type="helix" evidence="14">
    <location>
        <begin position="20"/>
        <end position="22"/>
    </location>
</feature>
<feature type="turn" evidence="14">
    <location>
        <begin position="23"/>
        <end position="26"/>
    </location>
</feature>
<feature type="strand" evidence="14">
    <location>
        <begin position="30"/>
        <end position="39"/>
    </location>
</feature>
<feature type="turn" evidence="14">
    <location>
        <begin position="40"/>
        <end position="43"/>
    </location>
</feature>
<feature type="strand" evidence="14">
    <location>
        <begin position="49"/>
        <end position="52"/>
    </location>
</feature>
<feature type="helix" evidence="14">
    <location>
        <begin position="62"/>
        <end position="68"/>
    </location>
</feature>
<feature type="helix" evidence="14">
    <location>
        <begin position="72"/>
        <end position="76"/>
    </location>
</feature>
<feature type="helix" evidence="14">
    <location>
        <begin position="81"/>
        <end position="96"/>
    </location>
</feature>
<feature type="helix" evidence="14">
    <location>
        <begin position="98"/>
        <end position="100"/>
    </location>
</feature>
<feature type="strand" evidence="14">
    <location>
        <begin position="104"/>
        <end position="111"/>
    </location>
</feature>
<feature type="helix" evidence="14">
    <location>
        <begin position="112"/>
        <end position="115"/>
    </location>
</feature>
<feature type="helix" evidence="14">
    <location>
        <begin position="118"/>
        <end position="124"/>
    </location>
</feature>
<feature type="helix" evidence="14">
    <location>
        <begin position="131"/>
        <end position="134"/>
    </location>
</feature>
<feature type="strand" evidence="14">
    <location>
        <begin position="135"/>
        <end position="138"/>
    </location>
</feature>
<feature type="helix" evidence="14">
    <location>
        <begin position="139"/>
        <end position="146"/>
    </location>
</feature>
<feature type="helix" evidence="14">
    <location>
        <begin position="153"/>
        <end position="155"/>
    </location>
</feature>
<feature type="helix" evidence="14">
    <location>
        <begin position="158"/>
        <end position="164"/>
    </location>
</feature>
<feature type="helix" evidence="14">
    <location>
        <begin position="170"/>
        <end position="172"/>
    </location>
</feature>
<feature type="helix" evidence="14">
    <location>
        <begin position="178"/>
        <end position="192"/>
    </location>
</feature>
<feature type="turn" evidence="14">
    <location>
        <begin position="194"/>
        <end position="196"/>
    </location>
</feature>
<feature type="helix" evidence="14">
    <location>
        <begin position="223"/>
        <end position="225"/>
    </location>
</feature>
<feature type="strand" evidence="14">
    <location>
        <begin position="226"/>
        <end position="230"/>
    </location>
</feature>
<feature type="helix" evidence="14">
    <location>
        <begin position="238"/>
        <end position="244"/>
    </location>
</feature>
<feature type="turn" evidence="14">
    <location>
        <begin position="245"/>
        <end position="247"/>
    </location>
</feature>
<feature type="strand" evidence="14">
    <location>
        <begin position="250"/>
        <end position="259"/>
    </location>
</feature>
<feature type="strand" evidence="14">
    <location>
        <begin position="263"/>
        <end position="274"/>
    </location>
</feature>
<feature type="helix" evidence="14">
    <location>
        <begin position="276"/>
        <end position="283"/>
    </location>
</feature>
<feature type="turn" evidence="14">
    <location>
        <begin position="284"/>
        <end position="287"/>
    </location>
</feature>
<feature type="strand" evidence="14">
    <location>
        <begin position="288"/>
        <end position="290"/>
    </location>
</feature>
<feature type="strand" evidence="14">
    <location>
        <begin position="293"/>
        <end position="299"/>
    </location>
</feature>
<feature type="helix" evidence="14">
    <location>
        <begin position="302"/>
        <end position="308"/>
    </location>
</feature>
<feature type="helix" evidence="12">
    <location>
        <begin position="313"/>
        <end position="321"/>
    </location>
</feature>
<feature type="strand" evidence="12">
    <location>
        <begin position="326"/>
        <end position="332"/>
    </location>
</feature>
<feature type="helix" evidence="12">
    <location>
        <begin position="339"/>
        <end position="346"/>
    </location>
</feature>
<feature type="helix" evidence="12">
    <location>
        <begin position="355"/>
        <end position="358"/>
    </location>
</feature>
<feature type="strand" evidence="12">
    <location>
        <begin position="359"/>
        <end position="363"/>
    </location>
</feature>
<feature type="strand" evidence="12">
    <location>
        <begin position="369"/>
        <end position="379"/>
    </location>
</feature>
<feature type="helix" evidence="12">
    <location>
        <begin position="380"/>
        <end position="387"/>
    </location>
</feature>
<feature type="turn" evidence="12">
    <location>
        <begin position="388"/>
        <end position="391"/>
    </location>
</feature>
<feature type="strand" evidence="11">
    <location>
        <begin position="392"/>
        <end position="396"/>
    </location>
</feature>
<feature type="strand" evidence="12">
    <location>
        <begin position="400"/>
        <end position="404"/>
    </location>
</feature>
<feature type="helix" evidence="12">
    <location>
        <begin position="406"/>
        <end position="416"/>
    </location>
</feature>
<feature type="strand" evidence="12">
    <location>
        <begin position="417"/>
        <end position="419"/>
    </location>
</feature>
<feature type="strand" evidence="13">
    <location>
        <begin position="446"/>
        <end position="451"/>
    </location>
</feature>
<feature type="helix" evidence="13">
    <location>
        <begin position="458"/>
        <end position="465"/>
    </location>
</feature>
<feature type="helix" evidence="13">
    <location>
        <begin position="466"/>
        <end position="471"/>
    </location>
</feature>
<feature type="strand" evidence="13">
    <location>
        <begin position="474"/>
        <end position="481"/>
    </location>
</feature>
<feature type="strand" evidence="13">
    <location>
        <begin position="485"/>
        <end position="497"/>
    </location>
</feature>
<feature type="helix" evidence="13">
    <location>
        <begin position="498"/>
        <end position="508"/>
    </location>
</feature>
<feature type="strand" evidence="13">
    <location>
        <begin position="511"/>
        <end position="513"/>
    </location>
</feature>
<feature type="strand" evidence="13">
    <location>
        <begin position="516"/>
        <end position="523"/>
    </location>
</feature>
<feature type="helix" evidence="13">
    <location>
        <begin position="525"/>
        <end position="532"/>
    </location>
</feature>
<accession>Q6NXG1</accession>
<accession>A6NHA8</accession>
<accession>A8MPX1</accession>
<accession>E9PB47</accession>
<accession>Q2M2B0</accession>
<accession>Q499G3</accession>
<accession>Q6PJ86</accession>
<accession>Q9NXL8</accession>
<organism>
    <name type="scientific">Homo sapiens</name>
    <name type="common">Human</name>
    <dbReference type="NCBI Taxonomy" id="9606"/>
    <lineage>
        <taxon>Eukaryota</taxon>
        <taxon>Metazoa</taxon>
        <taxon>Chordata</taxon>
        <taxon>Craniata</taxon>
        <taxon>Vertebrata</taxon>
        <taxon>Euteleostomi</taxon>
        <taxon>Mammalia</taxon>
        <taxon>Eutheria</taxon>
        <taxon>Euarchontoglires</taxon>
        <taxon>Primates</taxon>
        <taxon>Haplorrhini</taxon>
        <taxon>Catarrhini</taxon>
        <taxon>Hominidae</taxon>
        <taxon>Homo</taxon>
    </lineage>
</organism>
<gene>
    <name type="primary">ESRP1</name>
    <name type="synonym">RBM35A</name>
</gene>
<dbReference type="EMBL" id="BX647570">
    <property type="status" value="NOT_ANNOTATED_CDS"/>
    <property type="molecule type" value="mRNA"/>
</dbReference>
<dbReference type="EMBL" id="AC108860">
    <property type="status" value="NOT_ANNOTATED_CDS"/>
    <property type="molecule type" value="Genomic_DNA"/>
</dbReference>
<dbReference type="EMBL" id="AP005660">
    <property type="status" value="NOT_ANNOTATED_CDS"/>
    <property type="molecule type" value="Genomic_DNA"/>
</dbReference>
<dbReference type="EMBL" id="BC019932">
    <property type="protein sequence ID" value="AAH19932.1"/>
    <property type="status" value="ALT_INIT"/>
    <property type="molecule type" value="mRNA"/>
</dbReference>
<dbReference type="EMBL" id="BC067098">
    <property type="protein sequence ID" value="AAH67098.2"/>
    <property type="molecule type" value="mRNA"/>
</dbReference>
<dbReference type="EMBL" id="BC099916">
    <property type="protein sequence ID" value="AAH99916.2"/>
    <property type="molecule type" value="mRNA"/>
</dbReference>
<dbReference type="EMBL" id="BC112043">
    <property type="protein sequence ID" value="AAI12044.1"/>
    <property type="molecule type" value="mRNA"/>
</dbReference>
<dbReference type="EMBL" id="AK000178">
    <property type="protein sequence ID" value="BAA90992.1"/>
    <property type="status" value="ALT_SEQ"/>
    <property type="molecule type" value="mRNA"/>
</dbReference>
<dbReference type="CCDS" id="CCDS47895.1">
    <molecule id="Q6NXG1-5"/>
</dbReference>
<dbReference type="CCDS" id="CCDS47896.1">
    <molecule id="Q6NXG1-2"/>
</dbReference>
<dbReference type="CCDS" id="CCDS47897.1">
    <molecule id="Q6NXG1-1"/>
</dbReference>
<dbReference type="CCDS" id="CCDS47898.1">
    <molecule id="Q6NXG1-3"/>
</dbReference>
<dbReference type="RefSeq" id="NP_001030087.2">
    <molecule id="Q6NXG1-3"/>
    <property type="nucleotide sequence ID" value="NM_001034915.3"/>
</dbReference>
<dbReference type="RefSeq" id="NP_001116297.1">
    <molecule id="Q6NXG1-2"/>
    <property type="nucleotide sequence ID" value="NM_001122825.2"/>
</dbReference>
<dbReference type="RefSeq" id="NP_001116298.1">
    <molecule id="Q6NXG1-5"/>
    <property type="nucleotide sequence ID" value="NM_001122826.2"/>
</dbReference>
<dbReference type="RefSeq" id="NP_001116299.1">
    <property type="nucleotide sequence ID" value="NM_001122827.1"/>
</dbReference>
<dbReference type="RefSeq" id="NP_060167.2">
    <molecule id="Q6NXG1-1"/>
    <property type="nucleotide sequence ID" value="NM_017697.4"/>
</dbReference>
<dbReference type="RefSeq" id="XP_005251048.1">
    <molecule id="Q6NXG1-4"/>
    <property type="nucleotide sequence ID" value="XM_005250991.4"/>
</dbReference>
<dbReference type="RefSeq" id="XP_054216705.1">
    <molecule id="Q6NXG1-4"/>
    <property type="nucleotide sequence ID" value="XM_054360730.1"/>
</dbReference>
<dbReference type="PDB" id="2DHA">
    <property type="method" value="NMR"/>
    <property type="chains" value="A=310-419"/>
</dbReference>
<dbReference type="PDB" id="2RVJ">
    <property type="method" value="NMR"/>
    <property type="chains" value="A=438-539"/>
</dbReference>
<dbReference type="PDB" id="7VKI">
    <property type="method" value="X-ray"/>
    <property type="resolution" value="1.65 A"/>
    <property type="chains" value="A=312-430"/>
</dbReference>
<dbReference type="PDB" id="7VKJ">
    <property type="method" value="X-ray"/>
    <property type="resolution" value="1.45 A"/>
    <property type="chains" value="A/B/C/D/E/F/G/H=431-540"/>
</dbReference>
<dbReference type="PDB" id="7WRN">
    <property type="method" value="X-ray"/>
    <property type="resolution" value="1.85 A"/>
    <property type="chains" value="A=1-310"/>
</dbReference>
<dbReference type="PDBsum" id="2DHA"/>
<dbReference type="PDBsum" id="2RVJ"/>
<dbReference type="PDBsum" id="7VKI"/>
<dbReference type="PDBsum" id="7VKJ"/>
<dbReference type="PDBsum" id="7WRN"/>
<dbReference type="SMR" id="Q6NXG1"/>
<dbReference type="BioGRID" id="120196">
    <property type="interactions" value="81"/>
</dbReference>
<dbReference type="FunCoup" id="Q6NXG1">
    <property type="interactions" value="1752"/>
</dbReference>
<dbReference type="IntAct" id="Q6NXG1">
    <property type="interactions" value="57"/>
</dbReference>
<dbReference type="STRING" id="9606.ENSP00000405738"/>
<dbReference type="ChEMBL" id="CHEMBL4295865"/>
<dbReference type="GlyGen" id="Q6NXG1">
    <property type="glycosylation" value="1 site"/>
</dbReference>
<dbReference type="iPTMnet" id="Q6NXG1"/>
<dbReference type="PhosphoSitePlus" id="Q6NXG1"/>
<dbReference type="SwissPalm" id="Q6NXG1"/>
<dbReference type="BioMuta" id="ESRP1"/>
<dbReference type="DMDM" id="124020999"/>
<dbReference type="jPOST" id="Q6NXG1"/>
<dbReference type="MassIVE" id="Q6NXG1"/>
<dbReference type="PaxDb" id="9606-ENSP00000405738"/>
<dbReference type="PeptideAtlas" id="Q6NXG1"/>
<dbReference type="ProteomicsDB" id="19142"/>
<dbReference type="ProteomicsDB" id="66753">
    <molecule id="Q6NXG1-1"/>
</dbReference>
<dbReference type="ProteomicsDB" id="66754">
    <molecule id="Q6NXG1-2"/>
</dbReference>
<dbReference type="ProteomicsDB" id="66755">
    <molecule id="Q6NXG1-3"/>
</dbReference>
<dbReference type="ProteomicsDB" id="66756">
    <molecule id="Q6NXG1-4"/>
</dbReference>
<dbReference type="Pumba" id="Q6NXG1"/>
<dbReference type="Antibodypedia" id="6696">
    <property type="antibodies" value="149 antibodies from 29 providers"/>
</dbReference>
<dbReference type="DNASU" id="54845"/>
<dbReference type="Ensembl" id="ENST00000358397.9">
    <molecule id="Q6NXG1-3"/>
    <property type="protein sequence ID" value="ENSP00000351168.5"/>
    <property type="gene ID" value="ENSG00000104413.18"/>
</dbReference>
<dbReference type="Ensembl" id="ENST00000423620.6">
    <molecule id="Q6NXG1-5"/>
    <property type="protein sequence ID" value="ENSP00000407349.2"/>
    <property type="gene ID" value="ENSG00000104413.18"/>
</dbReference>
<dbReference type="Ensembl" id="ENST00000433389.8">
    <molecule id="Q6NXG1-1"/>
    <property type="protein sequence ID" value="ENSP00000405738.2"/>
    <property type="gene ID" value="ENSG00000104413.18"/>
</dbReference>
<dbReference type="Ensembl" id="ENST00000646773.1">
    <molecule id="Q6NXG1-2"/>
    <property type="protein sequence ID" value="ENSP00000494213.1"/>
    <property type="gene ID" value="ENSG00000104413.18"/>
</dbReference>
<dbReference type="GeneID" id="54845"/>
<dbReference type="KEGG" id="hsa:54845"/>
<dbReference type="MANE-Select" id="ENST00000433389.8">
    <property type="protein sequence ID" value="ENSP00000405738.2"/>
    <property type="RefSeq nucleotide sequence ID" value="NM_017697.4"/>
    <property type="RefSeq protein sequence ID" value="NP_060167.2"/>
</dbReference>
<dbReference type="UCSC" id="uc003ygq.5">
    <molecule id="Q6NXG1-1"/>
    <property type="organism name" value="human"/>
</dbReference>
<dbReference type="AGR" id="HGNC:25966"/>
<dbReference type="CTD" id="54845"/>
<dbReference type="DisGeNET" id="54845"/>
<dbReference type="GeneCards" id="ESRP1"/>
<dbReference type="HGNC" id="HGNC:25966">
    <property type="gene designation" value="ESRP1"/>
</dbReference>
<dbReference type="HPA" id="ENSG00000104413">
    <property type="expression patterns" value="Low tissue specificity"/>
</dbReference>
<dbReference type="MalaCards" id="ESRP1"/>
<dbReference type="MIM" id="612959">
    <property type="type" value="gene"/>
</dbReference>
<dbReference type="MIM" id="618013">
    <property type="type" value="phenotype"/>
</dbReference>
<dbReference type="neXtProt" id="NX_Q6NXG1"/>
<dbReference type="OpenTargets" id="ENSG00000104413"/>
<dbReference type="PharmGKB" id="PA164719324"/>
<dbReference type="VEuPathDB" id="HostDB:ENSG00000104413"/>
<dbReference type="eggNOG" id="KOG1365">
    <property type="taxonomic scope" value="Eukaryota"/>
</dbReference>
<dbReference type="GeneTree" id="ENSGT00940000159511"/>
<dbReference type="HOGENOM" id="CLU_008009_2_1_1"/>
<dbReference type="InParanoid" id="Q6NXG1"/>
<dbReference type="OMA" id="MISEPYX"/>
<dbReference type="OrthoDB" id="431068at2759"/>
<dbReference type="PAN-GO" id="Q6NXG1">
    <property type="GO annotations" value="4 GO annotations based on evolutionary models"/>
</dbReference>
<dbReference type="PhylomeDB" id="Q6NXG1"/>
<dbReference type="TreeFam" id="TF316157"/>
<dbReference type="PathwayCommons" id="Q6NXG1"/>
<dbReference type="Reactome" id="R-HSA-6802952">
    <property type="pathway name" value="Signaling by BRAF and RAF1 fusions"/>
</dbReference>
<dbReference type="Reactome" id="R-HSA-6803529">
    <property type="pathway name" value="FGFR2 alternative splicing"/>
</dbReference>
<dbReference type="SignaLink" id="Q6NXG1"/>
<dbReference type="BioGRID-ORCS" id="54845">
    <property type="hits" value="19 hits in 1162 CRISPR screens"/>
</dbReference>
<dbReference type="ChiTaRS" id="ESRP1">
    <property type="organism name" value="human"/>
</dbReference>
<dbReference type="EvolutionaryTrace" id="Q6NXG1"/>
<dbReference type="GenomeRNAi" id="54845"/>
<dbReference type="Pharos" id="Q6NXG1">
    <property type="development level" value="Tbio"/>
</dbReference>
<dbReference type="PRO" id="PR:Q6NXG1"/>
<dbReference type="Proteomes" id="UP000005640">
    <property type="component" value="Chromosome 8"/>
</dbReference>
<dbReference type="RNAct" id="Q6NXG1">
    <property type="molecule type" value="protein"/>
</dbReference>
<dbReference type="Bgee" id="ENSG00000104413">
    <property type="expression patterns" value="Expressed in secondary oocyte and 145 other cell types or tissues"/>
</dbReference>
<dbReference type="ExpressionAtlas" id="Q6NXG1">
    <property type="expression patterns" value="baseline and differential"/>
</dbReference>
<dbReference type="GO" id="GO:0016604">
    <property type="term" value="C:nuclear body"/>
    <property type="evidence" value="ECO:0000314"/>
    <property type="project" value="HPA"/>
</dbReference>
<dbReference type="GO" id="GO:0005654">
    <property type="term" value="C:nucleoplasm"/>
    <property type="evidence" value="ECO:0000314"/>
    <property type="project" value="HPA"/>
</dbReference>
<dbReference type="GO" id="GO:0005634">
    <property type="term" value="C:nucleus"/>
    <property type="evidence" value="ECO:0000314"/>
    <property type="project" value="UniProtKB"/>
</dbReference>
<dbReference type="GO" id="GO:1990904">
    <property type="term" value="C:ribonucleoprotein complex"/>
    <property type="evidence" value="ECO:0000318"/>
    <property type="project" value="GO_Central"/>
</dbReference>
<dbReference type="GO" id="GO:0003729">
    <property type="term" value="F:mRNA binding"/>
    <property type="evidence" value="ECO:0000314"/>
    <property type="project" value="UniProtKB"/>
</dbReference>
<dbReference type="GO" id="GO:0006397">
    <property type="term" value="P:mRNA processing"/>
    <property type="evidence" value="ECO:0007669"/>
    <property type="project" value="UniProtKB-KW"/>
</dbReference>
<dbReference type="GO" id="GO:0042669">
    <property type="term" value="P:regulation of inner ear auditory receptor cell fate specification"/>
    <property type="evidence" value="ECO:0000250"/>
    <property type="project" value="UniProtKB"/>
</dbReference>
<dbReference type="GO" id="GO:0043484">
    <property type="term" value="P:regulation of RNA splicing"/>
    <property type="evidence" value="ECO:0000314"/>
    <property type="project" value="UniProtKB"/>
</dbReference>
<dbReference type="GO" id="GO:0008380">
    <property type="term" value="P:RNA splicing"/>
    <property type="evidence" value="ECO:0007669"/>
    <property type="project" value="UniProtKB-KW"/>
</dbReference>
<dbReference type="CDD" id="cd12736">
    <property type="entry name" value="RRM1_ESRP1"/>
    <property type="match status" value="1"/>
</dbReference>
<dbReference type="CDD" id="cd12739">
    <property type="entry name" value="RRM2_ESRP1"/>
    <property type="match status" value="1"/>
</dbReference>
<dbReference type="CDD" id="cd12742">
    <property type="entry name" value="RRM3_ESRP1_ESRP2"/>
    <property type="match status" value="1"/>
</dbReference>
<dbReference type="FunFam" id="3.30.70.330:FF:000041">
    <property type="entry name" value="Epithelial splicing regulatory protein 1"/>
    <property type="match status" value="1"/>
</dbReference>
<dbReference type="FunFam" id="3.30.70.330:FF:000070">
    <property type="entry name" value="Epithelial splicing regulatory protein 1"/>
    <property type="match status" value="1"/>
</dbReference>
<dbReference type="FunFam" id="3.30.420.10:FF:000023">
    <property type="entry name" value="epithelial splicing regulatory protein 1 isoform X1"/>
    <property type="match status" value="1"/>
</dbReference>
<dbReference type="FunFam" id="3.30.70.330:FF:000056">
    <property type="entry name" value="epithelial splicing regulatory protein 1 isoform X1"/>
    <property type="match status" value="1"/>
</dbReference>
<dbReference type="Gene3D" id="3.30.70.330">
    <property type="match status" value="3"/>
</dbReference>
<dbReference type="Gene3D" id="3.30.420.10">
    <property type="entry name" value="Ribonuclease H-like superfamily/Ribonuclease H"/>
    <property type="match status" value="1"/>
</dbReference>
<dbReference type="InterPro" id="IPR050666">
    <property type="entry name" value="ESRP"/>
</dbReference>
<dbReference type="InterPro" id="IPR034427">
    <property type="entry name" value="ESRP1_RRM1"/>
</dbReference>
<dbReference type="InterPro" id="IPR012677">
    <property type="entry name" value="Nucleotide-bd_a/b_plait_sf"/>
</dbReference>
<dbReference type="InterPro" id="IPR035979">
    <property type="entry name" value="RBD_domain_sf"/>
</dbReference>
<dbReference type="InterPro" id="IPR012337">
    <property type="entry name" value="RNaseH-like_sf"/>
</dbReference>
<dbReference type="InterPro" id="IPR036397">
    <property type="entry name" value="RNaseH_sf"/>
</dbReference>
<dbReference type="InterPro" id="IPR000504">
    <property type="entry name" value="RRM_dom"/>
</dbReference>
<dbReference type="PANTHER" id="PTHR13976">
    <property type="entry name" value="HETEROGENEOUS NUCLEAR RIBONUCLEOPROTEIN-RELATED"/>
    <property type="match status" value="1"/>
</dbReference>
<dbReference type="SMART" id="SM00360">
    <property type="entry name" value="RRM"/>
    <property type="match status" value="3"/>
</dbReference>
<dbReference type="SUPFAM" id="SSF53098">
    <property type="entry name" value="Ribonuclease H-like"/>
    <property type="match status" value="1"/>
</dbReference>
<dbReference type="SUPFAM" id="SSF54928">
    <property type="entry name" value="RNA-binding domain, RBD"/>
    <property type="match status" value="2"/>
</dbReference>
<dbReference type="PROSITE" id="PS50102">
    <property type="entry name" value="RRM"/>
    <property type="match status" value="2"/>
</dbReference>
<proteinExistence type="evidence at protein level"/>
<evidence type="ECO:0000250" key="1">
    <source>
        <dbReference type="UniProtKB" id="Q3US41"/>
    </source>
</evidence>
<evidence type="ECO:0000250" key="2">
    <source>
        <dbReference type="UniProtKB" id="Q9H6T0"/>
    </source>
</evidence>
<evidence type="ECO:0000255" key="3">
    <source>
        <dbReference type="PROSITE-ProRule" id="PRU00176"/>
    </source>
</evidence>
<evidence type="ECO:0000269" key="4">
    <source>
    </source>
</evidence>
<evidence type="ECO:0000269" key="5">
    <source>
    </source>
</evidence>
<evidence type="ECO:0000303" key="6">
    <source>
    </source>
</evidence>
<evidence type="ECO:0000303" key="7">
    <source>
    </source>
</evidence>
<evidence type="ECO:0000303" key="8">
    <source>
    </source>
</evidence>
<evidence type="ECO:0000305" key="9"/>
<evidence type="ECO:0007744" key="10">
    <source>
    </source>
</evidence>
<evidence type="ECO:0007829" key="11">
    <source>
        <dbReference type="PDB" id="2DHA"/>
    </source>
</evidence>
<evidence type="ECO:0007829" key="12">
    <source>
        <dbReference type="PDB" id="7VKI"/>
    </source>
</evidence>
<evidence type="ECO:0007829" key="13">
    <source>
        <dbReference type="PDB" id="7VKJ"/>
    </source>
</evidence>
<evidence type="ECO:0007829" key="14">
    <source>
        <dbReference type="PDB" id="7WRN"/>
    </source>
</evidence>
<comment type="function">
    <text evidence="1 4">mRNA splicing factor that regulates the formation of epithelial cell-specific isoforms. Specifically regulates the expression of FGFR2-IIIb, an epithelial cell-specific isoform of FGFR2. Also regulates the splicing of CD44, CTNND1, ENAH, 3 transcripts that undergo changes in splicing during the epithelial-to-mesenchymal transition (EMT). Acts by directly binding specific sequences in mRNAs. Binds the GU-rich sequence motifs in the ISE/ISS-3, a cis-element regulatory region present in the mRNA of FGFR2 (PubMed:19285943). Regulates splicing and expression of genes involved in inner ear development, auditory hair cell differentiation, and cell fate specification in the cochlear epithelium (By similarity).</text>
</comment>
<comment type="interaction">
    <interactant intactId="EBI-10213520">
        <id>Q6NXG1</id>
    </interactant>
    <interactant intactId="EBI-948603">
        <id>Q03989</id>
        <label>ARID5A</label>
    </interactant>
    <organismsDiffer>false</organismsDiffer>
    <experiments>3</experiments>
</comment>
<comment type="interaction">
    <interactant intactId="EBI-10213520">
        <id>Q6NXG1</id>
    </interactant>
    <interactant intactId="EBI-11954292">
        <id>Q86V38</id>
        <label>ATN1</label>
    </interactant>
    <organismsDiffer>false</organismsDiffer>
    <experiments>3</experiments>
</comment>
<comment type="interaction">
    <interactant intactId="EBI-10213520">
        <id>Q6NXG1</id>
    </interactant>
    <interactant intactId="EBI-948169">
        <id>P13637</id>
        <label>ATP1A3</label>
    </interactant>
    <organismsDiffer>false</organismsDiffer>
    <experiments>3</experiments>
</comment>
<comment type="interaction">
    <interactant intactId="EBI-10213520">
        <id>Q6NXG1</id>
    </interactant>
    <interactant intactId="EBI-930964">
        <id>P54253</id>
        <label>ATXN1</label>
    </interactant>
    <organismsDiffer>false</organismsDiffer>
    <experiments>12</experiments>
</comment>
<comment type="interaction">
    <interactant intactId="EBI-10213520">
        <id>Q6NXG1</id>
    </interactant>
    <interactant intactId="EBI-10988864">
        <id>P46379-2</id>
        <label>BAG6</label>
    </interactant>
    <organismsDiffer>false</organismsDiffer>
    <experiments>3</experiments>
</comment>
<comment type="interaction">
    <interactant intactId="EBI-10213520">
        <id>Q6NXG1</id>
    </interactant>
    <interactant intactId="EBI-355710">
        <id>P48643</id>
        <label>CCT5</label>
    </interactant>
    <organismsDiffer>false</organismsDiffer>
    <experiments>3</experiments>
</comment>
<comment type="interaction">
    <interactant intactId="EBI-10213520">
        <id>Q6NXG1</id>
    </interactant>
    <interactant intactId="EBI-25837549">
        <id>P28329-3</id>
        <label>CHAT</label>
    </interactant>
    <organismsDiffer>false</organismsDiffer>
    <experiments>3</experiments>
</comment>
<comment type="interaction">
    <interactant intactId="EBI-10213520">
        <id>Q6NXG1</id>
    </interactant>
    <interactant intactId="EBI-6875961">
        <id>P02489</id>
        <label>CRYAA</label>
    </interactant>
    <organismsDiffer>false</organismsDiffer>
    <experiments>3</experiments>
</comment>
<comment type="interaction">
    <interactant intactId="EBI-10213520">
        <id>Q6NXG1</id>
    </interactant>
    <interactant intactId="EBI-724310">
        <id>Q15038</id>
        <label>DAZAP2</label>
    </interactant>
    <organismsDiffer>false</organismsDiffer>
    <experiments>3</experiments>
</comment>
<comment type="interaction">
    <interactant intactId="EBI-10213520">
        <id>Q6NXG1</id>
    </interactant>
    <interactant intactId="EBI-25840379">
        <id>Q14203-5</id>
        <label>DCTN1</label>
    </interactant>
    <organismsDiffer>false</organismsDiffer>
    <experiments>3</experiments>
</comment>
<comment type="interaction">
    <interactant intactId="EBI-10213520">
        <id>Q6NXG1</id>
    </interactant>
    <interactant intactId="EBI-395638">
        <id>O14645</id>
        <label>DNALI1</label>
    </interactant>
    <organismsDiffer>false</organismsDiffer>
    <experiments>3</experiments>
</comment>
<comment type="interaction">
    <interactant intactId="EBI-10213520">
        <id>Q6NXG1</id>
    </interactant>
    <interactant intactId="EBI-2565863">
        <id>P00488</id>
        <label>F13A1</label>
    </interactant>
    <organismsDiffer>false</organismsDiffer>
    <experiments>3</experiments>
</comment>
<comment type="interaction">
    <interactant intactId="EBI-10213520">
        <id>Q6NXG1</id>
    </interactant>
    <interactant intactId="EBI-348399">
        <id>P22607</id>
        <label>FGFR3</label>
    </interactant>
    <organismsDiffer>false</organismsDiffer>
    <experiments>3</experiments>
</comment>
<comment type="interaction">
    <interactant intactId="EBI-10213520">
        <id>Q6NXG1</id>
    </interactant>
    <interactant intactId="EBI-352682">
        <id>P04792</id>
        <label>HSPB1</label>
    </interactant>
    <organismsDiffer>false</organismsDiffer>
    <experiments>3</experiments>
</comment>
<comment type="interaction">
    <interactant intactId="EBI-10213520">
        <id>Q6NXG1</id>
    </interactant>
    <interactant intactId="EBI-352528">
        <id>P10809</id>
        <label>HSPD1</label>
    </interactant>
    <organismsDiffer>false</organismsDiffer>
    <experiments>3</experiments>
</comment>
<comment type="interaction">
    <interactant intactId="EBI-10213520">
        <id>Q6NXG1</id>
    </interactant>
    <interactant intactId="EBI-10975473">
        <id>O60333-2</id>
        <label>KIF1B</label>
    </interactant>
    <organismsDiffer>false</organismsDiffer>
    <experiments>3</experiments>
</comment>
<comment type="interaction">
    <interactant intactId="EBI-10213520">
        <id>Q6NXG1</id>
    </interactant>
    <interactant intactId="EBI-948266">
        <id>O14901</id>
        <label>KLF11</label>
    </interactant>
    <organismsDiffer>false</organismsDiffer>
    <experiments>3</experiments>
</comment>
<comment type="interaction">
    <interactant intactId="EBI-10213520">
        <id>Q6NXG1</id>
    </interactant>
    <interactant intactId="EBI-9478422">
        <id>Q96G42</id>
        <label>KLHDC7B</label>
    </interactant>
    <organismsDiffer>false</organismsDiffer>
    <experiments>3</experiments>
</comment>
<comment type="interaction">
    <interactant intactId="EBI-10213520">
        <id>Q6NXG1</id>
    </interactant>
    <interactant intactId="EBI-2432309">
        <id>Q92876</id>
        <label>KLK6</label>
    </interactant>
    <organismsDiffer>false</organismsDiffer>
    <experiments>3</experiments>
</comment>
<comment type="interaction">
    <interactant intactId="EBI-10213520">
        <id>Q6NXG1</id>
    </interactant>
    <interactant intactId="EBI-1048945">
        <id>Q3LI72</id>
        <label>KRTAP19-5</label>
    </interactant>
    <organismsDiffer>false</organismsDiffer>
    <experiments>3</experiments>
</comment>
<comment type="interaction">
    <interactant intactId="EBI-10213520">
        <id>Q6NXG1</id>
    </interactant>
    <interactant intactId="EBI-394558">
        <id>Q71SY5</id>
        <label>MED25</label>
    </interactant>
    <organismsDiffer>false</organismsDiffer>
    <experiments>3</experiments>
</comment>
<comment type="interaction">
    <interactant intactId="EBI-10213520">
        <id>Q6NXG1</id>
    </interactant>
    <interactant intactId="EBI-12813389">
        <id>Q8TDS5</id>
        <label>OXER1</label>
    </interactant>
    <organismsDiffer>false</organismsDiffer>
    <experiments>3</experiments>
</comment>
<comment type="interaction">
    <interactant intactId="EBI-10213520">
        <id>Q6NXG1</id>
    </interactant>
    <interactant intactId="EBI-716404">
        <id>P16284</id>
        <label>PECAM1</label>
    </interactant>
    <organismsDiffer>false</organismsDiffer>
    <experiments>3</experiments>
</comment>
<comment type="interaction">
    <interactant intactId="EBI-10213520">
        <id>Q6NXG1</id>
    </interactant>
    <interactant intactId="EBI-2827556">
        <id>Q13393</id>
        <label>PLD1</label>
    </interactant>
    <organismsDiffer>false</organismsDiffer>
    <experiments>3</experiments>
</comment>
<comment type="interaction">
    <interactant intactId="EBI-10213520">
        <id>Q6NXG1</id>
    </interactant>
    <interactant intactId="EBI-12754095">
        <id>P86480</id>
        <label>PRR20D</label>
    </interactant>
    <organismsDiffer>false</organismsDiffer>
    <experiments>3</experiments>
</comment>
<comment type="interaction">
    <interactant intactId="EBI-10213520">
        <id>Q6NXG1</id>
    </interactant>
    <interactant intactId="EBI-11987469">
        <id>Q6ZRY4</id>
        <label>RBPMS2</label>
    </interactant>
    <organismsDiffer>false</organismsDiffer>
    <experiments>4</experiments>
</comment>
<comment type="interaction">
    <interactant intactId="EBI-10213520">
        <id>Q6NXG1</id>
    </interactant>
    <interactant intactId="EBI-396669">
        <id>Q9Y3C5</id>
        <label>RNF11</label>
    </interactant>
    <organismsDiffer>false</organismsDiffer>
    <experiments>3</experiments>
</comment>
<comment type="interaction">
    <interactant intactId="EBI-10213520">
        <id>Q6NXG1</id>
    </interactant>
    <interactant intactId="EBI-1172957">
        <id>P34741</id>
        <label>SDC2</label>
    </interactant>
    <organismsDiffer>false</organismsDiffer>
    <experiments>3</experiments>
</comment>
<comment type="interaction">
    <interactant intactId="EBI-10213520">
        <id>Q6NXG1</id>
    </interactant>
    <interactant intactId="EBI-372899">
        <id>Q13148</id>
        <label>TARDBP</label>
    </interactant>
    <organismsDiffer>false</organismsDiffer>
    <experiments>6</experiments>
</comment>
<comment type="interaction">
    <interactant intactId="EBI-10213520">
        <id>Q6NXG1</id>
    </interactant>
    <interactant intactId="EBI-711909">
        <id>P02766</id>
        <label>TTR</label>
    </interactant>
    <organismsDiffer>false</organismsDiffer>
    <experiments>3</experiments>
</comment>
<comment type="interaction">
    <interactant intactId="EBI-10213520">
        <id>Q6NXG1</id>
    </interactant>
    <interactant intactId="EBI-741480">
        <id>Q9UMX0</id>
        <label>UBQLN1</label>
    </interactant>
    <organismsDiffer>false</organismsDiffer>
    <experiments>3</experiments>
</comment>
<comment type="interaction">
    <interactant intactId="EBI-10213520">
        <id>Q6NXG1</id>
    </interactant>
    <interactant intactId="EBI-353844">
        <id>P08670</id>
        <label>VIM</label>
    </interactant>
    <organismsDiffer>false</organismsDiffer>
    <experiments>3</experiments>
</comment>
<comment type="interaction">
    <interactant intactId="EBI-10213520">
        <id>Q6NXG1</id>
    </interactant>
    <interactant intactId="EBI-720609">
        <id>O76024</id>
        <label>WFS1</label>
    </interactant>
    <organismsDiffer>false</organismsDiffer>
    <experiments>3</experiments>
</comment>
<comment type="interaction">
    <interactant intactId="EBI-10213520">
        <id>Q6NXG1</id>
    </interactant>
    <interactant intactId="EBI-25900580">
        <id>Q9Y649</id>
    </interactant>
    <organismsDiffer>false</organismsDiffer>
    <experiments>3</experiments>
</comment>
<comment type="interaction">
    <interactant intactId="EBI-21567429">
        <id>Q6NXG1-3</id>
    </interactant>
    <interactant intactId="EBI-21535880">
        <id>Q92870-2</id>
        <label>APBB2</label>
    </interactant>
    <organismsDiffer>false</organismsDiffer>
    <experiments>3</experiments>
</comment>
<comment type="interaction">
    <interactant intactId="EBI-21567429">
        <id>Q6NXG1-3</id>
    </interactant>
    <interactant intactId="EBI-11954292">
        <id>Q86V38</id>
        <label>ATN1</label>
    </interactant>
    <organismsDiffer>false</organismsDiffer>
    <experiments>3</experiments>
</comment>
<comment type="interaction">
    <interactant intactId="EBI-21567429">
        <id>Q6NXG1-3</id>
    </interactant>
    <interactant intactId="EBI-930964">
        <id>P54253</id>
        <label>ATXN1</label>
    </interactant>
    <organismsDiffer>false</organismsDiffer>
    <experiments>6</experiments>
</comment>
<comment type="interaction">
    <interactant intactId="EBI-21567429">
        <id>Q6NXG1-3</id>
    </interactant>
    <interactant intactId="EBI-10988864">
        <id>P46379-2</id>
        <label>BAG6</label>
    </interactant>
    <organismsDiffer>false</organismsDiffer>
    <experiments>3</experiments>
</comment>
<comment type="interaction">
    <interactant intactId="EBI-21567429">
        <id>Q6NXG1-3</id>
    </interactant>
    <interactant intactId="EBI-718729">
        <id>P55212</id>
        <label>CASP6</label>
    </interactant>
    <organismsDiffer>false</organismsDiffer>
    <experiments>3</experiments>
</comment>
<comment type="interaction">
    <interactant intactId="EBI-21567429">
        <id>Q6NXG1-3</id>
    </interactant>
    <interactant intactId="EBI-6624398">
        <id>P06307</id>
        <label>CCK</label>
    </interactant>
    <organismsDiffer>false</organismsDiffer>
    <experiments>3</experiments>
</comment>
<comment type="interaction">
    <interactant intactId="EBI-21567429">
        <id>Q6NXG1-3</id>
    </interactant>
    <interactant intactId="EBI-6875961">
        <id>P02489</id>
        <label>CRYAA</label>
    </interactant>
    <organismsDiffer>false</organismsDiffer>
    <experiments>3</experiments>
</comment>
<comment type="interaction">
    <interactant intactId="EBI-21567429">
        <id>Q6NXG1-3</id>
    </interactant>
    <interactant intactId="EBI-395638">
        <id>O14645</id>
        <label>DNALI1</label>
    </interactant>
    <organismsDiffer>false</organismsDiffer>
    <experiments>3</experiments>
</comment>
<comment type="interaction">
    <interactant intactId="EBI-21567429">
        <id>Q6NXG1-3</id>
    </interactant>
    <interactant intactId="EBI-2565863">
        <id>P00488</id>
        <label>F13A1</label>
    </interactant>
    <organismsDiffer>false</organismsDiffer>
    <experiments>3</experiments>
</comment>
<comment type="interaction">
    <interactant intactId="EBI-21567429">
        <id>Q6NXG1-3</id>
    </interactant>
    <interactant intactId="EBI-466029">
        <id>P42858</id>
        <label>HTT</label>
    </interactant>
    <organismsDiffer>false</organismsDiffer>
    <experiments>6</experiments>
</comment>
<comment type="interaction">
    <interactant intactId="EBI-21567429">
        <id>Q6NXG1-3</id>
    </interactant>
    <interactant intactId="EBI-948266">
        <id>O14901</id>
        <label>KLF11</label>
    </interactant>
    <organismsDiffer>false</organismsDiffer>
    <experiments>3</experiments>
</comment>
<comment type="interaction">
    <interactant intactId="EBI-21567429">
        <id>Q6NXG1-3</id>
    </interactant>
    <interactant intactId="EBI-2432309">
        <id>Q92876</id>
        <label>KLK6</label>
    </interactant>
    <organismsDiffer>false</organismsDiffer>
    <experiments>3</experiments>
</comment>
<comment type="interaction">
    <interactant intactId="EBI-21567429">
        <id>Q6NXG1-3</id>
    </interactant>
    <interactant intactId="EBI-21591415">
        <id>P13473-2</id>
        <label>LAMP2</label>
    </interactant>
    <organismsDiffer>false</organismsDiffer>
    <experiments>3</experiments>
</comment>
<comment type="interaction">
    <interactant intactId="EBI-21567429">
        <id>Q6NXG1-3</id>
    </interactant>
    <interactant intactId="EBI-2811583">
        <id>Q9BVL2</id>
        <label>NUP58</label>
    </interactant>
    <organismsDiffer>false</organismsDiffer>
    <experiments>3</experiments>
</comment>
<comment type="interaction">
    <interactant intactId="EBI-21567429">
        <id>Q6NXG1-3</id>
    </interactant>
    <interactant intactId="EBI-748974">
        <id>Q96CV9</id>
        <label>OPTN</label>
    </interactant>
    <organismsDiffer>false</organismsDiffer>
    <experiments>3</experiments>
</comment>
<comment type="subcellular location">
    <subcellularLocation>
        <location evidence="4">Nucleus</location>
    </subcellularLocation>
</comment>
<comment type="alternative products">
    <event type="alternative splicing"/>
    <isoform>
        <id>Q6NXG1-1</id>
        <name>1</name>
        <sequence type="displayed"/>
    </isoform>
    <isoform>
        <id>Q6NXG1-2</id>
        <name>2</name>
        <sequence type="described" ref="VSP_022465 VSP_022466"/>
    </isoform>
    <isoform>
        <id>Q6NXG1-3</id>
        <name>3</name>
        <sequence type="described" ref="VSP_022464"/>
    </isoform>
    <isoform>
        <id>Q6NXG1-4</id>
        <name>4</name>
        <sequence type="described" ref="VSP_022467"/>
    </isoform>
    <isoform>
        <id>Q6NXG1-5</id>
        <name>5</name>
        <sequence type="described" ref="VSP_022464 VSP_022467"/>
    </isoform>
</comment>
<comment type="tissue specificity">
    <text evidence="4">Epithelial cell-specific.</text>
</comment>
<comment type="induction">
    <text evidence="4">Down-regulated during the epithelial-to-mesenchymal transition (EMT).</text>
</comment>
<comment type="disease" evidence="5">
    <disease id="DI-05261">
        <name>Deafness, autosomal recessive, 109</name>
        <acronym>DFNB109</acronym>
        <description>A form of non-syndromic, sensorineural deafness characterized by bilateral, congenital, severe to profound hearing loss. Sensorineural deafness results from damage to the neural receptors of the inner ear, the nerve pathways to the brain, or the area of the brain that receives sound information. DFNB109 affected individuals additionally exhibit vestibular dysplasia, although they do not manifest problems with balance or movement.</description>
        <dbReference type="MIM" id="618013"/>
    </disease>
    <text>The disease is caused by variants affecting the gene represented in this entry.</text>
</comment>
<comment type="similarity">
    <text evidence="9">Belongs to the ESRP family.</text>
</comment>
<comment type="sequence caution" evidence="9">
    <conflict type="erroneous initiation">
        <sequence resource="EMBL-CDS" id="AAH19932"/>
    </conflict>
</comment>
<comment type="sequence caution" evidence="9">
    <conflict type="erroneous initiation">
        <sequence resource="EMBL-CDS" id="BAA90992"/>
    </conflict>
    <text>Truncated N-terminus.</text>
</comment>
<comment type="sequence caution" evidence="9">
    <conflict type="frameshift">
        <sequence resource="EMBL-CDS" id="BAA90992"/>
    </conflict>
</comment>
<protein>
    <recommendedName>
        <fullName>Epithelial splicing regulatory protein 1</fullName>
    </recommendedName>
    <alternativeName>
        <fullName>RNA-binding motif protein 35A</fullName>
    </alternativeName>
    <alternativeName>
        <fullName>RNA-binding protein 35A</fullName>
    </alternativeName>
</protein>
<sequence>MTASPDYLVVLFGITAGATGAKLGSDEKELILLFWKVVDLANKKVGQLHEVLVRPDQLELTEDCKEETKIDVESLSSASQLDQALRQFNQSVSNELNIGVGTSFCLCTDGQLHVRQILHPEASKKNVLLPECFYSFFDLRKEFKKCCPGSPDIDKLDVATMTEYLNFEKSSSVSRYGASQVEDMGNIILAMISEPYNHRFSDPERVNYKFESGTCSKMELIDDNTVVRARGLPWQSSDQDIARFFKGLNIAKGGAALCLNAQGRRNGEALVRFVSEEHRDLALQRHKHHMGTRYIEVYKATGEDFLKIAGGTSNEVAQFLSKENQVIVRMRGLPFTATAEEVVAFFGQHCPITGGKEGILFVTYPDGRPTGDAFVLFACEEYAQNALRKHKDLLGKRYIELFRSTAAEVQQVLNRFSSAPLIPLPTPPIIPVLPQQFVPPTNVRDCIRLRGLPYAATIEDILDFLGEFATDIRTHGVHMVLNHQGRPSGDAFIQMKSADRAFMAAQKCHKKNMKDRYVEVFQCSAEEMNFVLMGGTLNRNGLSPPPCKLPCLSPPSYTFPAPAAVIPTEAAIYQPSVILNPRALQPSTAYYPAGTQLFMNYTAYYPSPPGSPNSLGYFPTAANLSGVPPQPGTVVRMQGLAYNTGVKEILNFFQGYQYATEDGLIHTNDQARTLPKEWVCI</sequence>
<reference key="1">
    <citation type="journal article" date="2007" name="BMC Genomics">
        <title>The full-ORF clone resource of the German cDNA consortium.</title>
        <authorList>
            <person name="Bechtel S."/>
            <person name="Rosenfelder H."/>
            <person name="Duda A."/>
            <person name="Schmidt C.P."/>
            <person name="Ernst U."/>
            <person name="Wellenreuther R."/>
            <person name="Mehrle A."/>
            <person name="Schuster C."/>
            <person name="Bahr A."/>
            <person name="Bloecker H."/>
            <person name="Heubner D."/>
            <person name="Hoerlein A."/>
            <person name="Michel G."/>
            <person name="Wedler H."/>
            <person name="Koehrer K."/>
            <person name="Ottenwaelder B."/>
            <person name="Poustka A."/>
            <person name="Wiemann S."/>
            <person name="Schupp I."/>
        </authorList>
    </citation>
    <scope>NUCLEOTIDE SEQUENCE [LARGE SCALE MRNA] (ISOFORM 5)</scope>
    <source>
        <tissue>Bone marrow</tissue>
    </source>
</reference>
<reference key="2">
    <citation type="journal article" date="2006" name="Nature">
        <title>DNA sequence and analysis of human chromosome 8.</title>
        <authorList>
            <person name="Nusbaum C."/>
            <person name="Mikkelsen T.S."/>
            <person name="Zody M.C."/>
            <person name="Asakawa S."/>
            <person name="Taudien S."/>
            <person name="Garber M."/>
            <person name="Kodira C.D."/>
            <person name="Schueler M.G."/>
            <person name="Shimizu A."/>
            <person name="Whittaker C.A."/>
            <person name="Chang J.L."/>
            <person name="Cuomo C.A."/>
            <person name="Dewar K."/>
            <person name="FitzGerald M.G."/>
            <person name="Yang X."/>
            <person name="Allen N.R."/>
            <person name="Anderson S."/>
            <person name="Asakawa T."/>
            <person name="Blechschmidt K."/>
            <person name="Bloom T."/>
            <person name="Borowsky M.L."/>
            <person name="Butler J."/>
            <person name="Cook A."/>
            <person name="Corum B."/>
            <person name="DeArellano K."/>
            <person name="DeCaprio D."/>
            <person name="Dooley K.T."/>
            <person name="Dorris L. III"/>
            <person name="Engels R."/>
            <person name="Gloeckner G."/>
            <person name="Hafez N."/>
            <person name="Hagopian D.S."/>
            <person name="Hall J.L."/>
            <person name="Ishikawa S.K."/>
            <person name="Jaffe D.B."/>
            <person name="Kamat A."/>
            <person name="Kudoh J."/>
            <person name="Lehmann R."/>
            <person name="Lokitsang T."/>
            <person name="Macdonald P."/>
            <person name="Major J.E."/>
            <person name="Matthews C.D."/>
            <person name="Mauceli E."/>
            <person name="Menzel U."/>
            <person name="Mihalev A.H."/>
            <person name="Minoshima S."/>
            <person name="Murayama Y."/>
            <person name="Naylor J.W."/>
            <person name="Nicol R."/>
            <person name="Nguyen C."/>
            <person name="O'Leary S.B."/>
            <person name="O'Neill K."/>
            <person name="Parker S.C.J."/>
            <person name="Polley A."/>
            <person name="Raymond C.K."/>
            <person name="Reichwald K."/>
            <person name="Rodriguez J."/>
            <person name="Sasaki T."/>
            <person name="Schilhabel M."/>
            <person name="Siddiqui R."/>
            <person name="Smith C.L."/>
            <person name="Sneddon T.P."/>
            <person name="Talamas J.A."/>
            <person name="Tenzin P."/>
            <person name="Topham K."/>
            <person name="Venkataraman V."/>
            <person name="Wen G."/>
            <person name="Yamazaki S."/>
            <person name="Young S.K."/>
            <person name="Zeng Q."/>
            <person name="Zimmer A.R."/>
            <person name="Rosenthal A."/>
            <person name="Birren B.W."/>
            <person name="Platzer M."/>
            <person name="Shimizu N."/>
            <person name="Lander E.S."/>
        </authorList>
    </citation>
    <scope>NUCLEOTIDE SEQUENCE [LARGE SCALE GENOMIC DNA]</scope>
</reference>
<reference key="3">
    <citation type="journal article" date="2004" name="Genome Res.">
        <title>The status, quality, and expansion of the NIH full-length cDNA project: the Mammalian Gene Collection (MGC).</title>
        <authorList>
            <consortium name="The MGC Project Team"/>
        </authorList>
    </citation>
    <scope>NUCLEOTIDE SEQUENCE [LARGE SCALE MRNA] (ISOFORMS 1; 2 AND 3)</scope>
    <source>
        <tissue>Liver</tissue>
        <tissue>Mammary gland</tissue>
        <tissue>Placenta</tissue>
    </source>
</reference>
<reference key="4">
    <citation type="journal article" date="2004" name="Nat. Genet.">
        <title>Complete sequencing and characterization of 21,243 full-length human cDNAs.</title>
        <authorList>
            <person name="Ota T."/>
            <person name="Suzuki Y."/>
            <person name="Nishikawa T."/>
            <person name="Otsuki T."/>
            <person name="Sugiyama T."/>
            <person name="Irie R."/>
            <person name="Wakamatsu A."/>
            <person name="Hayashi K."/>
            <person name="Sato H."/>
            <person name="Nagai K."/>
            <person name="Kimura K."/>
            <person name="Makita H."/>
            <person name="Sekine M."/>
            <person name="Obayashi M."/>
            <person name="Nishi T."/>
            <person name="Shibahara T."/>
            <person name="Tanaka T."/>
            <person name="Ishii S."/>
            <person name="Yamamoto J."/>
            <person name="Saito K."/>
            <person name="Kawai Y."/>
            <person name="Isono Y."/>
            <person name="Nakamura Y."/>
            <person name="Nagahari K."/>
            <person name="Murakami K."/>
            <person name="Yasuda T."/>
            <person name="Iwayanagi T."/>
            <person name="Wagatsuma M."/>
            <person name="Shiratori A."/>
            <person name="Sudo H."/>
            <person name="Hosoiri T."/>
            <person name="Kaku Y."/>
            <person name="Kodaira H."/>
            <person name="Kondo H."/>
            <person name="Sugawara M."/>
            <person name="Takahashi M."/>
            <person name="Kanda K."/>
            <person name="Yokoi T."/>
            <person name="Furuya T."/>
            <person name="Kikkawa E."/>
            <person name="Omura Y."/>
            <person name="Abe K."/>
            <person name="Kamihara K."/>
            <person name="Katsuta N."/>
            <person name="Sato K."/>
            <person name="Tanikawa M."/>
            <person name="Yamazaki M."/>
            <person name="Ninomiya K."/>
            <person name="Ishibashi T."/>
            <person name="Yamashita H."/>
            <person name="Murakawa K."/>
            <person name="Fujimori K."/>
            <person name="Tanai H."/>
            <person name="Kimata M."/>
            <person name="Watanabe M."/>
            <person name="Hiraoka S."/>
            <person name="Chiba Y."/>
            <person name="Ishida S."/>
            <person name="Ono Y."/>
            <person name="Takiguchi S."/>
            <person name="Watanabe S."/>
            <person name="Yosida M."/>
            <person name="Hotuta T."/>
            <person name="Kusano J."/>
            <person name="Kanehori K."/>
            <person name="Takahashi-Fujii A."/>
            <person name="Hara H."/>
            <person name="Tanase T.-O."/>
            <person name="Nomura Y."/>
            <person name="Togiya S."/>
            <person name="Komai F."/>
            <person name="Hara R."/>
            <person name="Takeuchi K."/>
            <person name="Arita M."/>
            <person name="Imose N."/>
            <person name="Musashino K."/>
            <person name="Yuuki H."/>
            <person name="Oshima A."/>
            <person name="Sasaki N."/>
            <person name="Aotsuka S."/>
            <person name="Yoshikawa Y."/>
            <person name="Matsunawa H."/>
            <person name="Ichihara T."/>
            <person name="Shiohata N."/>
            <person name="Sano S."/>
            <person name="Moriya S."/>
            <person name="Momiyama H."/>
            <person name="Satoh N."/>
            <person name="Takami S."/>
            <person name="Terashima Y."/>
            <person name="Suzuki O."/>
            <person name="Nakagawa S."/>
            <person name="Senoh A."/>
            <person name="Mizoguchi H."/>
            <person name="Goto Y."/>
            <person name="Shimizu F."/>
            <person name="Wakebe H."/>
            <person name="Hishigaki H."/>
            <person name="Watanabe T."/>
            <person name="Sugiyama A."/>
            <person name="Takemoto M."/>
            <person name="Kawakami B."/>
            <person name="Yamazaki M."/>
            <person name="Watanabe K."/>
            <person name="Kumagai A."/>
            <person name="Itakura S."/>
            <person name="Fukuzumi Y."/>
            <person name="Fujimori Y."/>
            <person name="Komiyama M."/>
            <person name="Tashiro H."/>
            <person name="Tanigami A."/>
            <person name="Fujiwara T."/>
            <person name="Ono T."/>
            <person name="Yamada K."/>
            <person name="Fujii Y."/>
            <person name="Ozaki K."/>
            <person name="Hirao M."/>
            <person name="Ohmori Y."/>
            <person name="Kawabata A."/>
            <person name="Hikiji T."/>
            <person name="Kobatake N."/>
            <person name="Inagaki H."/>
            <person name="Ikema Y."/>
            <person name="Okamoto S."/>
            <person name="Okitani R."/>
            <person name="Kawakami T."/>
            <person name="Noguchi S."/>
            <person name="Itoh T."/>
            <person name="Shigeta K."/>
            <person name="Senba T."/>
            <person name="Matsumura K."/>
            <person name="Nakajima Y."/>
            <person name="Mizuno T."/>
            <person name="Morinaga M."/>
            <person name="Sasaki M."/>
            <person name="Togashi T."/>
            <person name="Oyama M."/>
            <person name="Hata H."/>
            <person name="Watanabe M."/>
            <person name="Komatsu T."/>
            <person name="Mizushima-Sugano J."/>
            <person name="Satoh T."/>
            <person name="Shirai Y."/>
            <person name="Takahashi Y."/>
            <person name="Nakagawa K."/>
            <person name="Okumura K."/>
            <person name="Nagase T."/>
            <person name="Nomura N."/>
            <person name="Kikuchi H."/>
            <person name="Masuho Y."/>
            <person name="Yamashita R."/>
            <person name="Nakai K."/>
            <person name="Yada T."/>
            <person name="Nakamura Y."/>
            <person name="Ohara O."/>
            <person name="Isogai T."/>
            <person name="Sugano S."/>
        </authorList>
    </citation>
    <scope>NUCLEOTIDE SEQUENCE [LARGE SCALE MRNA] OF 142-681 (ISOFORM 4)</scope>
    <source>
        <tissue>Colon</tissue>
    </source>
</reference>
<reference key="5">
    <citation type="journal article" date="2009" name="Mol. Cell">
        <title>ESRP1 and ESRP2 are epithelial cell-type-specific regulators of FGFR2 splicing.</title>
        <authorList>
            <person name="Warzecha C.C."/>
            <person name="Sato T.K."/>
            <person name="Nabet B."/>
            <person name="Hogenesch J.B."/>
            <person name="Carstens R.P."/>
        </authorList>
    </citation>
    <scope>FUNCTION</scope>
    <scope>SUBCELLULAR LOCATION</scope>
    <scope>RNA-BINDING</scope>
    <scope>TISSUE SPECIFICITY</scope>
    <scope>INDUCTION</scope>
</reference>
<reference key="6">
    <citation type="journal article" date="2014" name="Mol. Cell. Proteomics">
        <title>Immunoaffinity enrichment and mass spectrometry analysis of protein methylation.</title>
        <authorList>
            <person name="Guo A."/>
            <person name="Gu H."/>
            <person name="Zhou J."/>
            <person name="Mulhern D."/>
            <person name="Wang Y."/>
            <person name="Lee K.A."/>
            <person name="Yang V."/>
            <person name="Aguiar M."/>
            <person name="Kornhauser J."/>
            <person name="Jia X."/>
            <person name="Ren J."/>
            <person name="Beausoleil S.A."/>
            <person name="Silva J.C."/>
            <person name="Vemulapalli V."/>
            <person name="Bedford M.T."/>
            <person name="Comb M.J."/>
        </authorList>
    </citation>
    <scope>METHYLATION [LARGE SCALE ANALYSIS] AT ARG-582</scope>
    <scope>IDENTIFICATION BY MASS SPECTROMETRY [LARGE SCALE ANALYSIS]</scope>
    <source>
        <tissue>Colon carcinoma</tissue>
    </source>
</reference>
<reference key="7">
    <citation type="journal article" date="2017" name="Dev. Cell">
        <title>ESRP1 mutations cause hearing loss due to defects in alternative splicing that disrupt cochlear development.</title>
        <authorList>
            <person name="Rohacek A.M."/>
            <person name="Bebee T.W."/>
            <person name="Tilton R.K."/>
            <person name="Radens C.M."/>
            <person name="McDermott-Roe C."/>
            <person name="Peart N."/>
            <person name="Kaur M."/>
            <person name="Zaykaner M."/>
            <person name="Cieply B."/>
            <person name="Musunuru K."/>
            <person name="Barash Y."/>
            <person name="Germiller J.A."/>
            <person name="Krantz I.D."/>
            <person name="Carstens R.P."/>
            <person name="Epstein D.J."/>
        </authorList>
    </citation>
    <scope>INVOLVEMENT IN DFNB109</scope>
    <scope>VARIANT DFNB109 VAL-259</scope>
    <scope>CHARACTERIZATION OF VARIANT DFNB109 VAL-259</scope>
</reference>
<reference key="8">
    <citation type="submission" date="2006-09" db="PDB data bank">
        <title>Solution structure of the second RNA recognition motif in hypothetical protein FLJ201171.</title>
        <authorList>
            <consortium name="RIKEN structural genomics initiative (RSGI)"/>
        </authorList>
    </citation>
    <scope>STRUCTURE BY NMR OF 310-419</scope>
</reference>
<name>ESRP1_HUMAN</name>
<keyword id="KW-0002">3D-structure</keyword>
<keyword id="KW-0025">Alternative splicing</keyword>
<keyword id="KW-0209">Deafness</keyword>
<keyword id="KW-0225">Disease variant</keyword>
<keyword id="KW-0488">Methylation</keyword>
<keyword id="KW-0507">mRNA processing</keyword>
<keyword id="KW-0508">mRNA splicing</keyword>
<keyword id="KW-1010">Non-syndromic deafness</keyword>
<keyword id="KW-0539">Nucleus</keyword>
<keyword id="KW-0597">Phosphoprotein</keyword>
<keyword id="KW-1267">Proteomics identification</keyword>
<keyword id="KW-1185">Reference proteome</keyword>
<keyword id="KW-0677">Repeat</keyword>
<keyword id="KW-0694">RNA-binding</keyword>